<dbReference type="EC" id="3.4.21.88" evidence="1"/>
<dbReference type="EMBL" id="CP000613">
    <property type="protein sequence ID" value="ACI98603.1"/>
    <property type="molecule type" value="Genomic_DNA"/>
</dbReference>
<dbReference type="RefSeq" id="WP_012566391.1">
    <property type="nucleotide sequence ID" value="NC_011420.2"/>
</dbReference>
<dbReference type="SMR" id="B6IST2"/>
<dbReference type="STRING" id="414684.RC1_1189"/>
<dbReference type="MEROPS" id="S24.001"/>
<dbReference type="KEGG" id="rce:RC1_1189"/>
<dbReference type="eggNOG" id="COG1974">
    <property type="taxonomic scope" value="Bacteria"/>
</dbReference>
<dbReference type="HOGENOM" id="CLU_066192_45_2_5"/>
<dbReference type="OrthoDB" id="9802364at2"/>
<dbReference type="Proteomes" id="UP000001591">
    <property type="component" value="Chromosome"/>
</dbReference>
<dbReference type="GO" id="GO:0003677">
    <property type="term" value="F:DNA binding"/>
    <property type="evidence" value="ECO:0007669"/>
    <property type="project" value="UniProtKB-UniRule"/>
</dbReference>
<dbReference type="GO" id="GO:0004252">
    <property type="term" value="F:serine-type endopeptidase activity"/>
    <property type="evidence" value="ECO:0007669"/>
    <property type="project" value="UniProtKB-UniRule"/>
</dbReference>
<dbReference type="GO" id="GO:0006281">
    <property type="term" value="P:DNA repair"/>
    <property type="evidence" value="ECO:0007669"/>
    <property type="project" value="UniProtKB-UniRule"/>
</dbReference>
<dbReference type="GO" id="GO:0006260">
    <property type="term" value="P:DNA replication"/>
    <property type="evidence" value="ECO:0007669"/>
    <property type="project" value="UniProtKB-UniRule"/>
</dbReference>
<dbReference type="GO" id="GO:0045892">
    <property type="term" value="P:negative regulation of DNA-templated transcription"/>
    <property type="evidence" value="ECO:0007669"/>
    <property type="project" value="UniProtKB-UniRule"/>
</dbReference>
<dbReference type="GO" id="GO:0006508">
    <property type="term" value="P:proteolysis"/>
    <property type="evidence" value="ECO:0007669"/>
    <property type="project" value="InterPro"/>
</dbReference>
<dbReference type="GO" id="GO:0009432">
    <property type="term" value="P:SOS response"/>
    <property type="evidence" value="ECO:0007669"/>
    <property type="project" value="UniProtKB-UniRule"/>
</dbReference>
<dbReference type="CDD" id="cd06529">
    <property type="entry name" value="S24_LexA-like"/>
    <property type="match status" value="1"/>
</dbReference>
<dbReference type="FunFam" id="2.10.109.10:FF:000001">
    <property type="entry name" value="LexA repressor"/>
    <property type="match status" value="1"/>
</dbReference>
<dbReference type="Gene3D" id="2.10.109.10">
    <property type="entry name" value="Umud Fragment, subunit A"/>
    <property type="match status" value="1"/>
</dbReference>
<dbReference type="Gene3D" id="1.10.10.10">
    <property type="entry name" value="Winged helix-like DNA-binding domain superfamily/Winged helix DNA-binding domain"/>
    <property type="match status" value="1"/>
</dbReference>
<dbReference type="HAMAP" id="MF_00015">
    <property type="entry name" value="LexA"/>
    <property type="match status" value="1"/>
</dbReference>
<dbReference type="InterPro" id="IPR006200">
    <property type="entry name" value="LexA"/>
</dbReference>
<dbReference type="InterPro" id="IPR039418">
    <property type="entry name" value="LexA-like"/>
</dbReference>
<dbReference type="InterPro" id="IPR036286">
    <property type="entry name" value="LexA/Signal_pep-like_sf"/>
</dbReference>
<dbReference type="InterPro" id="IPR006199">
    <property type="entry name" value="LexA_DNA-bd_dom"/>
</dbReference>
<dbReference type="InterPro" id="IPR050077">
    <property type="entry name" value="LexA_repressor"/>
</dbReference>
<dbReference type="InterPro" id="IPR006197">
    <property type="entry name" value="Peptidase_S24_LexA"/>
</dbReference>
<dbReference type="InterPro" id="IPR015927">
    <property type="entry name" value="Peptidase_S24_S26A/B/C"/>
</dbReference>
<dbReference type="InterPro" id="IPR036388">
    <property type="entry name" value="WH-like_DNA-bd_sf"/>
</dbReference>
<dbReference type="InterPro" id="IPR036390">
    <property type="entry name" value="WH_DNA-bd_sf"/>
</dbReference>
<dbReference type="NCBIfam" id="TIGR00498">
    <property type="entry name" value="lexA"/>
    <property type="match status" value="1"/>
</dbReference>
<dbReference type="PANTHER" id="PTHR33516">
    <property type="entry name" value="LEXA REPRESSOR"/>
    <property type="match status" value="1"/>
</dbReference>
<dbReference type="PANTHER" id="PTHR33516:SF2">
    <property type="entry name" value="LEXA REPRESSOR-RELATED"/>
    <property type="match status" value="1"/>
</dbReference>
<dbReference type="Pfam" id="PF01726">
    <property type="entry name" value="LexA_DNA_bind"/>
    <property type="match status" value="1"/>
</dbReference>
<dbReference type="Pfam" id="PF00717">
    <property type="entry name" value="Peptidase_S24"/>
    <property type="match status" value="1"/>
</dbReference>
<dbReference type="PRINTS" id="PR00726">
    <property type="entry name" value="LEXASERPTASE"/>
</dbReference>
<dbReference type="SUPFAM" id="SSF51306">
    <property type="entry name" value="LexA/Signal peptidase"/>
    <property type="match status" value="1"/>
</dbReference>
<dbReference type="SUPFAM" id="SSF46785">
    <property type="entry name" value="Winged helix' DNA-binding domain"/>
    <property type="match status" value="1"/>
</dbReference>
<gene>
    <name evidence="1" type="primary">lexA</name>
    <name type="ordered locus">RC1_1189</name>
</gene>
<keyword id="KW-0068">Autocatalytic cleavage</keyword>
<keyword id="KW-0227">DNA damage</keyword>
<keyword id="KW-0234">DNA repair</keyword>
<keyword id="KW-0235">DNA replication</keyword>
<keyword id="KW-0238">DNA-binding</keyword>
<keyword id="KW-0378">Hydrolase</keyword>
<keyword id="KW-1185">Reference proteome</keyword>
<keyword id="KW-0678">Repressor</keyword>
<keyword id="KW-0742">SOS response</keyword>
<keyword id="KW-0804">Transcription</keyword>
<keyword id="KW-0805">Transcription regulation</keyword>
<feature type="chain" id="PRO_1000089588" description="LexA repressor">
    <location>
        <begin position="1"/>
        <end position="237"/>
    </location>
</feature>
<feature type="DNA-binding region" description="H-T-H motif" evidence="1">
    <location>
        <begin position="26"/>
        <end position="46"/>
    </location>
</feature>
<feature type="active site" description="For autocatalytic cleavage activity" evidence="1">
    <location>
        <position position="158"/>
    </location>
</feature>
<feature type="active site" description="For autocatalytic cleavage activity" evidence="1">
    <location>
        <position position="196"/>
    </location>
</feature>
<feature type="site" description="Cleavage; by autolysis" evidence="1">
    <location>
        <begin position="123"/>
        <end position="124"/>
    </location>
</feature>
<protein>
    <recommendedName>
        <fullName evidence="1">LexA repressor</fullName>
        <ecNumber evidence="1">3.4.21.88</ecNumber>
    </recommendedName>
</protein>
<proteinExistence type="inferred from homology"/>
<accession>B6IST2</accession>
<sequence length="237" mass="26111">MLTRKQQELLLFIHERLKDGGVSPSFDEMKDALGLKSKSGIHRLITGLEERGFIRRLPHRARALEVLRLPEQPAPLRVAPRTEEPVRFRPNVIRGDFRGALPGREARGDAEAVSLPLYGRIAAGLPIEALRDTTASIDVPTGLIASGEHYALEVAGDSMVDAGILDGDTVIIQRCETAENGTVIVALVDDNEVTLKRLRRKGNSIALEPANPAYETRVFGADRVRIQGRLVGLIRRY</sequence>
<organism>
    <name type="scientific">Rhodospirillum centenum (strain ATCC 51521 / SW)</name>
    <dbReference type="NCBI Taxonomy" id="414684"/>
    <lineage>
        <taxon>Bacteria</taxon>
        <taxon>Pseudomonadati</taxon>
        <taxon>Pseudomonadota</taxon>
        <taxon>Alphaproteobacteria</taxon>
        <taxon>Rhodospirillales</taxon>
        <taxon>Rhodospirillaceae</taxon>
        <taxon>Rhodospirillum</taxon>
    </lineage>
</organism>
<reference key="1">
    <citation type="submission" date="2007-03" db="EMBL/GenBank/DDBJ databases">
        <title>Genome sequence of Rhodospirillum centenum.</title>
        <authorList>
            <person name="Touchman J.W."/>
            <person name="Bauer C."/>
            <person name="Blankenship R.E."/>
        </authorList>
    </citation>
    <scope>NUCLEOTIDE SEQUENCE [LARGE SCALE GENOMIC DNA]</scope>
    <source>
        <strain>ATCC 51521 / SW</strain>
    </source>
</reference>
<comment type="function">
    <text evidence="1">Represses a number of genes involved in the response to DNA damage (SOS response), including recA and lexA. In the presence of single-stranded DNA, RecA interacts with LexA causing an autocatalytic cleavage which disrupts the DNA-binding part of LexA, leading to derepression of the SOS regulon and eventually DNA repair.</text>
</comment>
<comment type="catalytic activity">
    <reaction evidence="1">
        <text>Hydrolysis of Ala-|-Gly bond in repressor LexA.</text>
        <dbReference type="EC" id="3.4.21.88"/>
    </reaction>
</comment>
<comment type="subunit">
    <text evidence="1">Homodimer.</text>
</comment>
<comment type="similarity">
    <text evidence="1">Belongs to the peptidase S24 family.</text>
</comment>
<name>LEXA_RHOCS</name>
<evidence type="ECO:0000255" key="1">
    <source>
        <dbReference type="HAMAP-Rule" id="MF_00015"/>
    </source>
</evidence>